<feature type="chain" id="PRO_1000061394" description="L-threonine 3-dehydrogenase">
    <location>
        <begin position="1"/>
        <end position="341"/>
    </location>
</feature>
<feature type="active site" description="Charge relay system" evidence="1">
    <location>
        <position position="40"/>
    </location>
</feature>
<feature type="active site" description="Charge relay system" evidence="1">
    <location>
        <position position="43"/>
    </location>
</feature>
<feature type="binding site" evidence="1">
    <location>
        <position position="38"/>
    </location>
    <ligand>
        <name>Zn(2+)</name>
        <dbReference type="ChEBI" id="CHEBI:29105"/>
        <label>1</label>
        <note>catalytic</note>
    </ligand>
</feature>
<feature type="binding site" evidence="1">
    <location>
        <position position="63"/>
    </location>
    <ligand>
        <name>Zn(2+)</name>
        <dbReference type="ChEBI" id="CHEBI:29105"/>
        <label>1</label>
        <note>catalytic</note>
    </ligand>
</feature>
<feature type="binding site" evidence="1">
    <location>
        <position position="64"/>
    </location>
    <ligand>
        <name>Zn(2+)</name>
        <dbReference type="ChEBI" id="CHEBI:29105"/>
        <label>1</label>
        <note>catalytic</note>
    </ligand>
</feature>
<feature type="binding site" evidence="1">
    <location>
        <position position="93"/>
    </location>
    <ligand>
        <name>Zn(2+)</name>
        <dbReference type="ChEBI" id="CHEBI:29105"/>
        <label>2</label>
    </ligand>
</feature>
<feature type="binding site" evidence="1">
    <location>
        <position position="96"/>
    </location>
    <ligand>
        <name>Zn(2+)</name>
        <dbReference type="ChEBI" id="CHEBI:29105"/>
        <label>2</label>
    </ligand>
</feature>
<feature type="binding site" evidence="1">
    <location>
        <position position="99"/>
    </location>
    <ligand>
        <name>Zn(2+)</name>
        <dbReference type="ChEBI" id="CHEBI:29105"/>
        <label>2</label>
    </ligand>
</feature>
<feature type="binding site" evidence="1">
    <location>
        <position position="107"/>
    </location>
    <ligand>
        <name>Zn(2+)</name>
        <dbReference type="ChEBI" id="CHEBI:29105"/>
        <label>2</label>
    </ligand>
</feature>
<feature type="binding site" evidence="1">
    <location>
        <position position="175"/>
    </location>
    <ligand>
        <name>NAD(+)</name>
        <dbReference type="ChEBI" id="CHEBI:57540"/>
    </ligand>
</feature>
<feature type="binding site" evidence="1">
    <location>
        <position position="195"/>
    </location>
    <ligand>
        <name>NAD(+)</name>
        <dbReference type="ChEBI" id="CHEBI:57540"/>
    </ligand>
</feature>
<feature type="binding site" evidence="1">
    <location>
        <position position="200"/>
    </location>
    <ligand>
        <name>NAD(+)</name>
        <dbReference type="ChEBI" id="CHEBI:57540"/>
    </ligand>
</feature>
<feature type="binding site" evidence="1">
    <location>
        <begin position="262"/>
        <end position="264"/>
    </location>
    <ligand>
        <name>NAD(+)</name>
        <dbReference type="ChEBI" id="CHEBI:57540"/>
    </ligand>
</feature>
<feature type="binding site" evidence="1">
    <location>
        <begin position="286"/>
        <end position="287"/>
    </location>
    <ligand>
        <name>NAD(+)</name>
        <dbReference type="ChEBI" id="CHEBI:57540"/>
    </ligand>
</feature>
<feature type="site" description="Important for catalytic activity for the proton relay mechanism but does not participate directly in the coordination of zinc atom" evidence="1">
    <location>
        <position position="148"/>
    </location>
</feature>
<protein>
    <recommendedName>
        <fullName evidence="1">L-threonine 3-dehydrogenase</fullName>
        <shortName evidence="1">TDH</shortName>
        <ecNumber evidence="1">1.1.1.103</ecNumber>
    </recommendedName>
</protein>
<sequence length="341" mass="37182">MKALSKLKAEEGIWMTDVPEPEVGHNDLLIKIRKTAICGTDVHIYNWDEWSQKTIPVPMVVGHEYVGEVVGIGQEVKGFKIGDRVSGEGHITCGHCRNCRGGRTHLCRNTVGVGVNRPGCFAEYLVIPAFNAFKIPDNISDDLASIFDPFGNAVHTALSFDLVGEDVLVSGAGPIGIMAAAVAKHVGARNVVITDVNEYRLSLARKMGVTRAVDVSKENLNDVMAELGMTEGFDVGLEMSGAPPAFRSMLDTMNHGGRIAMLGIPPSDMSIDWNKVIFKGLFIKGIYGREMFETWYKMAALIQSGLDLTPIITHHFGIDDFQKGFDAMRSGQSGKVILSWD</sequence>
<gene>
    <name evidence="1" type="primary">tdh</name>
    <name type="ordered locus">Ent638_0119</name>
</gene>
<name>TDH_ENT38</name>
<organism>
    <name type="scientific">Enterobacter sp. (strain 638)</name>
    <dbReference type="NCBI Taxonomy" id="399742"/>
    <lineage>
        <taxon>Bacteria</taxon>
        <taxon>Pseudomonadati</taxon>
        <taxon>Pseudomonadota</taxon>
        <taxon>Gammaproteobacteria</taxon>
        <taxon>Enterobacterales</taxon>
        <taxon>Enterobacteriaceae</taxon>
        <taxon>Enterobacter</taxon>
    </lineage>
</organism>
<accession>A4W529</accession>
<reference key="1">
    <citation type="journal article" date="2010" name="PLoS Genet.">
        <title>Genome sequence of the plant growth promoting endophytic bacterium Enterobacter sp. 638.</title>
        <authorList>
            <person name="Taghavi S."/>
            <person name="van der Lelie D."/>
            <person name="Hoffman A."/>
            <person name="Zhang Y.B."/>
            <person name="Walla M.D."/>
            <person name="Vangronsveld J."/>
            <person name="Newman L."/>
            <person name="Monchy S."/>
        </authorList>
    </citation>
    <scope>NUCLEOTIDE SEQUENCE [LARGE SCALE GENOMIC DNA]</scope>
    <source>
        <strain>638</strain>
    </source>
</reference>
<keyword id="KW-0963">Cytoplasm</keyword>
<keyword id="KW-0479">Metal-binding</keyword>
<keyword id="KW-0520">NAD</keyword>
<keyword id="KW-0560">Oxidoreductase</keyword>
<keyword id="KW-0862">Zinc</keyword>
<comment type="function">
    <text evidence="1">Catalyzes the NAD(+)-dependent oxidation of L-threonine to 2-amino-3-ketobutyrate.</text>
</comment>
<comment type="catalytic activity">
    <reaction evidence="1">
        <text>L-threonine + NAD(+) = (2S)-2-amino-3-oxobutanoate + NADH + H(+)</text>
        <dbReference type="Rhea" id="RHEA:13161"/>
        <dbReference type="ChEBI" id="CHEBI:15378"/>
        <dbReference type="ChEBI" id="CHEBI:57540"/>
        <dbReference type="ChEBI" id="CHEBI:57926"/>
        <dbReference type="ChEBI" id="CHEBI:57945"/>
        <dbReference type="ChEBI" id="CHEBI:78948"/>
        <dbReference type="EC" id="1.1.1.103"/>
    </reaction>
</comment>
<comment type="cofactor">
    <cofactor evidence="1">
        <name>Zn(2+)</name>
        <dbReference type="ChEBI" id="CHEBI:29105"/>
    </cofactor>
    <text evidence="1">Binds 2 Zn(2+) ions per subunit.</text>
</comment>
<comment type="pathway">
    <text evidence="1">Amino-acid degradation; L-threonine degradation via oxydo-reductase pathway; glycine from L-threonine: step 1/2.</text>
</comment>
<comment type="subunit">
    <text evidence="1">Homotetramer.</text>
</comment>
<comment type="subcellular location">
    <subcellularLocation>
        <location evidence="1">Cytoplasm</location>
    </subcellularLocation>
</comment>
<comment type="similarity">
    <text evidence="1">Belongs to the zinc-containing alcohol dehydrogenase family.</text>
</comment>
<evidence type="ECO:0000255" key="1">
    <source>
        <dbReference type="HAMAP-Rule" id="MF_00627"/>
    </source>
</evidence>
<proteinExistence type="inferred from homology"/>
<dbReference type="EC" id="1.1.1.103" evidence="1"/>
<dbReference type="EMBL" id="CP000653">
    <property type="protein sequence ID" value="ABP58809.1"/>
    <property type="molecule type" value="Genomic_DNA"/>
</dbReference>
<dbReference type="RefSeq" id="WP_011915385.1">
    <property type="nucleotide sequence ID" value="NC_009436.1"/>
</dbReference>
<dbReference type="SMR" id="A4W529"/>
<dbReference type="STRING" id="399742.Ent638_0119"/>
<dbReference type="GeneID" id="93307293"/>
<dbReference type="KEGG" id="ent:Ent638_0119"/>
<dbReference type="eggNOG" id="COG1063">
    <property type="taxonomic scope" value="Bacteria"/>
</dbReference>
<dbReference type="HOGENOM" id="CLU_026673_11_0_6"/>
<dbReference type="OrthoDB" id="9773078at2"/>
<dbReference type="UniPathway" id="UPA00046">
    <property type="reaction ID" value="UER00505"/>
</dbReference>
<dbReference type="Proteomes" id="UP000000230">
    <property type="component" value="Chromosome"/>
</dbReference>
<dbReference type="GO" id="GO:0005737">
    <property type="term" value="C:cytoplasm"/>
    <property type="evidence" value="ECO:0007669"/>
    <property type="project" value="UniProtKB-SubCell"/>
</dbReference>
<dbReference type="GO" id="GO:0008743">
    <property type="term" value="F:L-threonine 3-dehydrogenase activity"/>
    <property type="evidence" value="ECO:0007669"/>
    <property type="project" value="UniProtKB-UniRule"/>
</dbReference>
<dbReference type="GO" id="GO:0008270">
    <property type="term" value="F:zinc ion binding"/>
    <property type="evidence" value="ECO:0007669"/>
    <property type="project" value="UniProtKB-UniRule"/>
</dbReference>
<dbReference type="GO" id="GO:0019518">
    <property type="term" value="P:L-threonine catabolic process to glycine"/>
    <property type="evidence" value="ECO:0007669"/>
    <property type="project" value="UniProtKB-UniPathway"/>
</dbReference>
<dbReference type="FunFam" id="3.40.50.720:FF:000059">
    <property type="entry name" value="L-threonine 3-dehydrogenase"/>
    <property type="match status" value="1"/>
</dbReference>
<dbReference type="Gene3D" id="3.90.180.10">
    <property type="entry name" value="Medium-chain alcohol dehydrogenases, catalytic domain"/>
    <property type="match status" value="1"/>
</dbReference>
<dbReference type="Gene3D" id="3.40.50.720">
    <property type="entry name" value="NAD(P)-binding Rossmann-like Domain"/>
    <property type="match status" value="1"/>
</dbReference>
<dbReference type="HAMAP" id="MF_00627">
    <property type="entry name" value="Thr_dehydrog"/>
    <property type="match status" value="1"/>
</dbReference>
<dbReference type="InterPro" id="IPR013149">
    <property type="entry name" value="ADH-like_C"/>
</dbReference>
<dbReference type="InterPro" id="IPR013154">
    <property type="entry name" value="ADH-like_N"/>
</dbReference>
<dbReference type="InterPro" id="IPR002328">
    <property type="entry name" value="ADH_Zn_CS"/>
</dbReference>
<dbReference type="InterPro" id="IPR011032">
    <property type="entry name" value="GroES-like_sf"/>
</dbReference>
<dbReference type="InterPro" id="IPR004627">
    <property type="entry name" value="L-Threonine_3-DHase"/>
</dbReference>
<dbReference type="InterPro" id="IPR036291">
    <property type="entry name" value="NAD(P)-bd_dom_sf"/>
</dbReference>
<dbReference type="InterPro" id="IPR020843">
    <property type="entry name" value="PKS_ER"/>
</dbReference>
<dbReference type="InterPro" id="IPR050129">
    <property type="entry name" value="Zn_alcohol_dh"/>
</dbReference>
<dbReference type="NCBIfam" id="NF003808">
    <property type="entry name" value="PRK05396.1"/>
    <property type="match status" value="1"/>
</dbReference>
<dbReference type="NCBIfam" id="TIGR00692">
    <property type="entry name" value="tdh"/>
    <property type="match status" value="1"/>
</dbReference>
<dbReference type="PANTHER" id="PTHR43401">
    <property type="entry name" value="L-THREONINE 3-DEHYDROGENASE"/>
    <property type="match status" value="1"/>
</dbReference>
<dbReference type="PANTHER" id="PTHR43401:SF2">
    <property type="entry name" value="L-THREONINE 3-DEHYDROGENASE"/>
    <property type="match status" value="1"/>
</dbReference>
<dbReference type="Pfam" id="PF08240">
    <property type="entry name" value="ADH_N"/>
    <property type="match status" value="1"/>
</dbReference>
<dbReference type="Pfam" id="PF00107">
    <property type="entry name" value="ADH_zinc_N"/>
    <property type="match status" value="1"/>
</dbReference>
<dbReference type="SMART" id="SM00829">
    <property type="entry name" value="PKS_ER"/>
    <property type="match status" value="1"/>
</dbReference>
<dbReference type="SUPFAM" id="SSF50129">
    <property type="entry name" value="GroES-like"/>
    <property type="match status" value="1"/>
</dbReference>
<dbReference type="SUPFAM" id="SSF51735">
    <property type="entry name" value="NAD(P)-binding Rossmann-fold domains"/>
    <property type="match status" value="1"/>
</dbReference>
<dbReference type="PROSITE" id="PS00059">
    <property type="entry name" value="ADH_ZINC"/>
    <property type="match status" value="1"/>
</dbReference>